<gene>
    <name evidence="15" type="primary">mqsA</name>
    <name type="synonym">ygiT</name>
    <name type="ordered locus">b3021</name>
    <name type="ordered locus">JW2989</name>
</gene>
<proteinExistence type="evidence at protein level"/>
<organism>
    <name type="scientific">Escherichia coli (strain K12)</name>
    <dbReference type="NCBI Taxonomy" id="83333"/>
    <lineage>
        <taxon>Bacteria</taxon>
        <taxon>Pseudomonadati</taxon>
        <taxon>Pseudomonadota</taxon>
        <taxon>Gammaproteobacteria</taxon>
        <taxon>Enterobacterales</taxon>
        <taxon>Enterobacteriaceae</taxon>
        <taxon>Escherichia</taxon>
    </lineage>
</organism>
<protein>
    <recommendedName>
        <fullName evidence="15">Antitoxin MqsA</fullName>
    </recommendedName>
</protein>
<comment type="function">
    <text evidence="3 4 6 9 11 13 18">Antitoxin component of a type II toxin-antitoxin (TA) system. Labile antitoxin that binds to the MqsR mRNA interferase toxin and neutralizes its endoribonuclease activity. Overexpression prevents MqsR-mediated cessation of cell growth and inhibition of cell proliferation. Initially reported to act as a cotranscription factor with MqsA (PubMed:19690171, PubMed:20105222). Following further experiments, the MqsR-MqsA complex does not bind DNA and all reported data are actually due to a small fraction of free MqsA alone binding DNA. Addition of MqsR to a preformed MqsA-promoter DNA complex causes dissociation of the MqsA-DNA complex, probably causing derepression of MqsA-repressed transcripts (PubMed:23172222). MqsA binds to 2 palindromes in the promoter region of the mqsRA operon activating its transcription. Binds to other promoters, inducing mcbR and spy and repressing cspD among others (PubMed:20105222). Binds to and represses the rpoS promoter, the master stress regulator, resulting in decreased cyclic-di-GMP, reduced stress resistance, increased cell motility and decreased biofilm formation; in these experiments 5 TA systems are missing (lacks MazEF, RelEB, ChpB, YoeB-YefM, YafQ-DinJ) (PubMed:21516113). An earlier study showed overexpression alone increases biofilm formation, perhaps by repressing cspD; in these experiments the 5 TA systems are present (PubMed:20105222). Represses the csgD promoter. In the presence of stress, when this protein is degraded, the promoters it represses are derepressed, leading to biofilm formation (Probable). This TA system mediates cell growth during bile acid deoxycholate stress by degrading mRNA for probable deoxycholate-binding protein YgiS; bile acid detergents such as deoxycholate are important for host defense against bacterial growth in the gall bladder and duodenum (PubMed:25534751).</text>
</comment>
<comment type="cofactor">
    <cofactor evidence="5 7 8 10">
        <name>Zn(2+)</name>
        <dbReference type="ChEBI" id="CHEBI:29105"/>
    </cofactor>
    <text evidence="5 7 8 10">Binds 1 Zn(2+) ion per subunit.</text>
</comment>
<comment type="biophysicochemical properties">
    <temperatureDependence>
        <text evidence="11">The MqsR-MqsA complex is exceptionally thermostable with a Tm of 83.4 degress Celsius versus 48.1 degress Celsius for MqsR and 61.1 degress Celsius for MqsA.</text>
    </temperatureDependence>
</comment>
<comment type="subunit">
    <text evidence="3 5 7 8">Homodimer. Crystallizes as a heterotetramer with MqsA, MqsR-MqsA(2)-MqsR (PubMed:20041169). Purifies as a probable heterohexamer of 2 MqsR dimers and 1 MqsA dimer (PubMed:19690171). Binds promoter DNA as a dimer (PubMed:21068382). When the 2 dissociate the MsqR mRNA interferase becomes active.</text>
</comment>
<comment type="interaction">
    <interactant intactId="EBI-1120353">
        <id>Q46864</id>
    </interactant>
    <interactant intactId="EBI-1120746">
        <id>P69222</id>
        <label>infA</label>
    </interactant>
    <organismsDiffer>false</organismsDiffer>
    <experiments>2</experiments>
</comment>
<comment type="interaction">
    <interactant intactId="EBI-1120353">
        <id>Q46864</id>
    </interactant>
    <interactant intactId="EBI-9134416">
        <id>P07000</id>
        <label>pldB</label>
    </interactant>
    <organismsDiffer>false</organismsDiffer>
    <experiments>2</experiments>
</comment>
<comment type="interaction">
    <interactant intactId="EBI-1120353">
        <id>Q46864</id>
    </interactant>
    <interactant intactId="EBI-1119646">
        <id>P0ACQ0</id>
        <label>rbsR</label>
    </interactant>
    <organismsDiffer>false</organismsDiffer>
    <experiments>3</experiments>
</comment>
<comment type="interaction">
    <interactant intactId="EBI-1120353">
        <id>Q46864</id>
    </interactant>
    <interactant intactId="EBI-546875">
        <id>P0A7L8</id>
        <label>rpmA</label>
    </interactant>
    <organismsDiffer>false</organismsDiffer>
    <experiments>2</experiments>
</comment>
<comment type="interaction">
    <interactant intactId="EBI-1120353">
        <id>Q46864</id>
    </interactant>
    <interactant intactId="EBI-1129580">
        <id>P0AGB6</id>
        <label>rpoE</label>
    </interactant>
    <organismsDiffer>false</organismsDiffer>
    <experiments>2</experiments>
</comment>
<comment type="interaction">
    <interactant intactId="EBI-1120353">
        <id>Q46864</id>
    </interactant>
    <interactant intactId="EBI-9138393">
        <id>P0AAU7</id>
        <label>ybfE</label>
    </interactant>
    <organismsDiffer>false</organismsDiffer>
    <experiments>2</experiments>
</comment>
<comment type="induction">
    <text evidence="2 4 6 12 14">Induced by amino acid starvation, glucose starvation and when translation is blocked. Induction is decreased in the absence of the Lon protease suggesting, by homology to other toxin-antitoxin systems, that Lon may degrade the MqsA antitoxin. Transcription is activated by MqsA (PubMed:20105222). It has been suggested that MqsA represses its own operon (PubMed:19690171). Not more induced in persister cells (PubMed:16768798). A member of the mqsRA operon. This operon induced by ectopic expression of toxins RelE, HicA and YafQ but not by MazF or HicA (PubMed:23432955).</text>
</comment>
<comment type="domain">
    <text evidence="5 8 10">The Zn-binding N-terminal domain (residues 1-65) binds to the MqsR mRNA interferase toxin and makes contact with the DNA phosphate backbone, while the C-terminus (residues 70-131) binds the promoter in a sequence-specific manner. They are linked by a short flexible domain (PubMed:22789559).</text>
</comment>
<comment type="PTM">
    <text evidence="16 17">Degraded in the presence of oxidative stress, maybe by the Lon and/or ClpX proteases.</text>
</comment>
<comment type="disruption phenotype">
    <text evidence="2 9 13">Essential for growth, it cannot be disrupted (PubMed:16768798). A double mqsR-mqsA deletion leads to increased rpoS mRNA levels, resulting in increased cyclic-di-GMP levels, increasing stress resistance, increased biofilm formation (PubMed:21516113). The double mutant has increased metabolism and respiration in the presence of the bile acid deoxycholate and consequently grows less well. Decreases cell survival in the presence of 20% deoxycholate (PubMed:25534751).</text>
</comment>
<keyword id="KW-0002">3D-structure</keyword>
<keyword id="KW-0238">DNA-binding</keyword>
<keyword id="KW-0479">Metal-binding</keyword>
<keyword id="KW-1185">Reference proteome</keyword>
<keyword id="KW-0678">Repressor</keyword>
<keyword id="KW-0346">Stress response</keyword>
<keyword id="KW-1277">Toxin-antitoxin system</keyword>
<keyword id="KW-0804">Transcription</keyword>
<keyword id="KW-0805">Transcription regulation</keyword>
<keyword id="KW-0862">Zinc</keyword>
<name>MQSA_ECOLI</name>
<evidence type="ECO:0000255" key="1">
    <source>
        <dbReference type="PROSITE-ProRule" id="PRU00257"/>
    </source>
</evidence>
<evidence type="ECO:0000269" key="2">
    <source>
    </source>
</evidence>
<evidence type="ECO:0000269" key="3">
    <source>
    </source>
</evidence>
<evidence type="ECO:0000269" key="4">
    <source>
    </source>
</evidence>
<evidence type="ECO:0000269" key="5">
    <source>
    </source>
</evidence>
<evidence type="ECO:0000269" key="6">
    <source>
    </source>
</evidence>
<evidence type="ECO:0000269" key="7">
    <source>
    </source>
</evidence>
<evidence type="ECO:0000269" key="8">
    <source>
    </source>
</evidence>
<evidence type="ECO:0000269" key="9">
    <source>
    </source>
</evidence>
<evidence type="ECO:0000269" key="10">
    <source>
    </source>
</evidence>
<evidence type="ECO:0000269" key="11">
    <source>
    </source>
</evidence>
<evidence type="ECO:0000269" key="12">
    <source>
    </source>
</evidence>
<evidence type="ECO:0000269" key="13">
    <source>
    </source>
</evidence>
<evidence type="ECO:0000303" key="14">
    <source>
    </source>
</evidence>
<evidence type="ECO:0000303" key="15">
    <source>
    </source>
</evidence>
<evidence type="ECO:0000303" key="16">
    <source>
    </source>
</evidence>
<evidence type="ECO:0000303" key="17">
    <source>
    </source>
</evidence>
<evidence type="ECO:0000303" key="18">
    <source>
    </source>
</evidence>
<evidence type="ECO:0007829" key="19">
    <source>
        <dbReference type="PDB" id="3FMY"/>
    </source>
</evidence>
<evidence type="ECO:0007829" key="20">
    <source>
        <dbReference type="PDB" id="3GA8"/>
    </source>
</evidence>
<evidence type="ECO:0007829" key="21">
    <source>
        <dbReference type="PDB" id="3HI2"/>
    </source>
</evidence>
<dbReference type="EMBL" id="U28377">
    <property type="protein sequence ID" value="AAA69189.1"/>
    <property type="molecule type" value="Genomic_DNA"/>
</dbReference>
<dbReference type="EMBL" id="U00096">
    <property type="protein sequence ID" value="AAC76057.1"/>
    <property type="molecule type" value="Genomic_DNA"/>
</dbReference>
<dbReference type="EMBL" id="AP009048">
    <property type="protein sequence ID" value="BAE77077.1"/>
    <property type="molecule type" value="Genomic_DNA"/>
</dbReference>
<dbReference type="PIR" id="C65089">
    <property type="entry name" value="C65089"/>
</dbReference>
<dbReference type="RefSeq" id="NP_417493.1">
    <property type="nucleotide sequence ID" value="NC_000913.3"/>
</dbReference>
<dbReference type="RefSeq" id="WP_000650107.1">
    <property type="nucleotide sequence ID" value="NZ_STEB01000001.1"/>
</dbReference>
<dbReference type="PDB" id="2KZ8">
    <property type="method" value="NMR"/>
    <property type="chains" value="A=1-131"/>
</dbReference>
<dbReference type="PDB" id="3FMY">
    <property type="method" value="X-ray"/>
    <property type="resolution" value="1.40 A"/>
    <property type="chains" value="A=62-131"/>
</dbReference>
<dbReference type="PDB" id="3GA8">
    <property type="method" value="X-ray"/>
    <property type="resolution" value="1.70 A"/>
    <property type="chains" value="A=1-76"/>
</dbReference>
<dbReference type="PDB" id="3GN5">
    <property type="method" value="X-ray"/>
    <property type="resolution" value="2.15 A"/>
    <property type="chains" value="A/B=1-131"/>
</dbReference>
<dbReference type="PDB" id="3HI2">
    <property type="method" value="X-ray"/>
    <property type="resolution" value="2.00 A"/>
    <property type="chains" value="A/C=1-76"/>
</dbReference>
<dbReference type="PDB" id="3O9X">
    <property type="method" value="X-ray"/>
    <property type="resolution" value="2.10 A"/>
    <property type="chains" value="A/B=1-131"/>
</dbReference>
<dbReference type="PDBsum" id="2KZ8"/>
<dbReference type="PDBsum" id="3FMY"/>
<dbReference type="PDBsum" id="3GA8"/>
<dbReference type="PDBsum" id="3GN5"/>
<dbReference type="PDBsum" id="3HI2"/>
<dbReference type="PDBsum" id="3O9X"/>
<dbReference type="BMRB" id="Q46864"/>
<dbReference type="SMR" id="Q46864"/>
<dbReference type="BioGRID" id="4259247">
    <property type="interactions" value="250"/>
</dbReference>
<dbReference type="BioGRID" id="850181">
    <property type="interactions" value="51"/>
</dbReference>
<dbReference type="ComplexPortal" id="CPX-1084">
    <property type="entry name" value="MqsRA toxin-antitoxin complex"/>
</dbReference>
<dbReference type="DIP" id="DIP-12226N"/>
<dbReference type="FunCoup" id="Q46864">
    <property type="interactions" value="60"/>
</dbReference>
<dbReference type="IntAct" id="Q46864">
    <property type="interactions" value="54"/>
</dbReference>
<dbReference type="STRING" id="511145.b3021"/>
<dbReference type="jPOST" id="Q46864"/>
<dbReference type="PaxDb" id="511145-b3021"/>
<dbReference type="EnsemblBacteria" id="AAC76057">
    <property type="protein sequence ID" value="AAC76057"/>
    <property type="gene ID" value="b3021"/>
</dbReference>
<dbReference type="GeneID" id="945814"/>
<dbReference type="KEGG" id="ecj:JW2989"/>
<dbReference type="KEGG" id="eco:b3021"/>
<dbReference type="KEGG" id="ecoc:C3026_16505"/>
<dbReference type="PATRIC" id="fig|1411691.4.peg.3709"/>
<dbReference type="EchoBASE" id="EB2840"/>
<dbReference type="eggNOG" id="COG2944">
    <property type="taxonomic scope" value="Bacteria"/>
</dbReference>
<dbReference type="HOGENOM" id="CLU_115776_1_1_6"/>
<dbReference type="InParanoid" id="Q46864"/>
<dbReference type="OMA" id="CGEGIWD"/>
<dbReference type="OrthoDB" id="7349669at2"/>
<dbReference type="BioCyc" id="EcoCyc:G7571-MONOMER"/>
<dbReference type="BioCyc" id="MetaCyc:G7571-MONOMER"/>
<dbReference type="EvolutionaryTrace" id="Q46864"/>
<dbReference type="PRO" id="PR:Q46864"/>
<dbReference type="Proteomes" id="UP000000625">
    <property type="component" value="Chromosome"/>
</dbReference>
<dbReference type="GO" id="GO:0110001">
    <property type="term" value="C:toxin-antitoxin complex"/>
    <property type="evidence" value="ECO:0000353"/>
    <property type="project" value="ComplexPortal"/>
</dbReference>
<dbReference type="GO" id="GO:0046872">
    <property type="term" value="F:metal ion binding"/>
    <property type="evidence" value="ECO:0007669"/>
    <property type="project" value="UniProtKB-KW"/>
</dbReference>
<dbReference type="GO" id="GO:0042803">
    <property type="term" value="F:protein homodimerization activity"/>
    <property type="evidence" value="ECO:0000314"/>
    <property type="project" value="EcoCyc"/>
</dbReference>
<dbReference type="GO" id="GO:0043565">
    <property type="term" value="F:sequence-specific DNA binding"/>
    <property type="evidence" value="ECO:0000314"/>
    <property type="project" value="EcoCyc"/>
</dbReference>
<dbReference type="GO" id="GO:0006355">
    <property type="term" value="P:regulation of DNA-templated transcription"/>
    <property type="evidence" value="ECO:0000315"/>
    <property type="project" value="EcoCyc"/>
</dbReference>
<dbReference type="GO" id="GO:0044010">
    <property type="term" value="P:single-species biofilm formation"/>
    <property type="evidence" value="ECO:0000314"/>
    <property type="project" value="ComplexPortal"/>
</dbReference>
<dbReference type="CDD" id="cd00093">
    <property type="entry name" value="HTH_XRE"/>
    <property type="match status" value="1"/>
</dbReference>
<dbReference type="CDD" id="cd12870">
    <property type="entry name" value="MqsA"/>
    <property type="match status" value="1"/>
</dbReference>
<dbReference type="Gene3D" id="3.10.20.860">
    <property type="match status" value="1"/>
</dbReference>
<dbReference type="Gene3D" id="1.10.260.40">
    <property type="entry name" value="lambda repressor-like DNA-binding domains"/>
    <property type="match status" value="1"/>
</dbReference>
<dbReference type="InterPro" id="IPR001387">
    <property type="entry name" value="Cro/C1-type_HTH"/>
</dbReference>
<dbReference type="InterPro" id="IPR052359">
    <property type="entry name" value="HTH-type_reg/antitoxin"/>
</dbReference>
<dbReference type="InterPro" id="IPR010982">
    <property type="entry name" value="Lambda_DNA-bd_dom_sf"/>
</dbReference>
<dbReference type="InterPro" id="IPR022452">
    <property type="entry name" value="MqsA"/>
</dbReference>
<dbReference type="InterPro" id="IPR032758">
    <property type="entry name" value="MqsA/HigA-2"/>
</dbReference>
<dbReference type="InterPro" id="IPR022453">
    <property type="entry name" value="Znf_MqsA-type"/>
</dbReference>
<dbReference type="NCBIfam" id="TIGR03830">
    <property type="entry name" value="CxxCG_CxxCG_HTH"/>
    <property type="match status" value="1"/>
</dbReference>
<dbReference type="NCBIfam" id="TIGR03831">
    <property type="entry name" value="YgiT_finger"/>
    <property type="match status" value="1"/>
</dbReference>
<dbReference type="PANTHER" id="PTHR36511:SF4">
    <property type="entry name" value="ANTITOXIN MQSA"/>
    <property type="match status" value="1"/>
</dbReference>
<dbReference type="PANTHER" id="PTHR36511">
    <property type="entry name" value="MERR FAMILY BACTERIAL REGULATORY PROTEIN"/>
    <property type="match status" value="1"/>
</dbReference>
<dbReference type="Pfam" id="PF15731">
    <property type="entry name" value="MqsA_antitoxin"/>
    <property type="match status" value="1"/>
</dbReference>
<dbReference type="SMART" id="SM00530">
    <property type="entry name" value="HTH_XRE"/>
    <property type="match status" value="1"/>
</dbReference>
<dbReference type="SUPFAM" id="SSF47413">
    <property type="entry name" value="lambda repressor-like DNA-binding domains"/>
    <property type="match status" value="1"/>
</dbReference>
<dbReference type="PROSITE" id="PS50943">
    <property type="entry name" value="HTH_CROC1"/>
    <property type="match status" value="1"/>
</dbReference>
<accession>Q46864</accession>
<accession>Q2M9H9</accession>
<reference key="1">
    <citation type="journal article" date="1997" name="Science">
        <title>The complete genome sequence of Escherichia coli K-12.</title>
        <authorList>
            <person name="Blattner F.R."/>
            <person name="Plunkett G. III"/>
            <person name="Bloch C.A."/>
            <person name="Perna N.T."/>
            <person name="Burland V."/>
            <person name="Riley M."/>
            <person name="Collado-Vides J."/>
            <person name="Glasner J.D."/>
            <person name="Rode C.K."/>
            <person name="Mayhew G.F."/>
            <person name="Gregor J."/>
            <person name="Davis N.W."/>
            <person name="Kirkpatrick H.A."/>
            <person name="Goeden M.A."/>
            <person name="Rose D.J."/>
            <person name="Mau B."/>
            <person name="Shao Y."/>
        </authorList>
    </citation>
    <scope>NUCLEOTIDE SEQUENCE [LARGE SCALE GENOMIC DNA]</scope>
    <source>
        <strain>K12 / MG1655 / ATCC 47076</strain>
    </source>
</reference>
<reference key="2">
    <citation type="journal article" date="2006" name="Mol. Syst. Biol.">
        <title>Highly accurate genome sequences of Escherichia coli K-12 strains MG1655 and W3110.</title>
        <authorList>
            <person name="Hayashi K."/>
            <person name="Morooka N."/>
            <person name="Yamamoto Y."/>
            <person name="Fujita K."/>
            <person name="Isono K."/>
            <person name="Choi S."/>
            <person name="Ohtsubo E."/>
            <person name="Baba T."/>
            <person name="Wanner B.L."/>
            <person name="Mori H."/>
            <person name="Horiuchi T."/>
        </authorList>
    </citation>
    <scope>NUCLEOTIDE SEQUENCE [LARGE SCALE GENOMIC DNA]</scope>
    <source>
        <strain>K12 / W3110 / ATCC 27325 / DSM 5911</strain>
    </source>
</reference>
<reference key="3">
    <citation type="journal article" date="2006" name="BMC Microbiol.">
        <title>Persisters: a distinct physiological state of E. coli.</title>
        <authorList>
            <person name="Shah D."/>
            <person name="Zhang Z."/>
            <person name="Khodursky A."/>
            <person name="Kaldalu N."/>
            <person name="Kurg K."/>
            <person name="Lewis K."/>
        </authorList>
    </citation>
    <scope>IDENTIFICATION AS A TOXIN-ANTITOXIN SYSTEM</scope>
    <scope>INDUCTION</scope>
    <scope>DISRUPTION PHENOTYPE</scope>
    <source>
        <strain>K12</strain>
    </source>
</reference>
<reference key="4">
    <citation type="journal article" date="2009" name="J. Biol. Chem.">
        <title>MqsR, a crucial regulator for quorum sensing and biofilm formation, is a GCU-specific mRNA interferase in Escherichia coli.</title>
        <authorList>
            <person name="Yamaguchi Y."/>
            <person name="Park J.H."/>
            <person name="Inouye M."/>
        </authorList>
    </citation>
    <scope>FUNCTION AS AN ANTITOXIN</scope>
    <scope>FUNCTION AS A TRANSCRIPTIONAL REGULATOR</scope>
    <scope>SUBUNIT</scope>
    <scope>DNA-BINDING</scope>
    <scope>OPERON STRUCTURE</scope>
</reference>
<reference key="5">
    <citation type="journal article" date="2010" name="Environ. Microbiol.">
        <title>Escherichia coli toxin/antitoxin pair MqsR/MqsA regulate toxin CspD.</title>
        <authorList>
            <person name="Kim Y."/>
            <person name="Wang X."/>
            <person name="Zhang X.S."/>
            <person name="Grigoriu S."/>
            <person name="Page R."/>
            <person name="Peti W."/>
            <person name="Wood T.K."/>
        </authorList>
    </citation>
    <scope>FUNCTION AS AN ANTITOXIN</scope>
    <scope>DNA-BINDING</scope>
    <scope>FUNCTION AS A TRANSCRIPTION REGULATOR</scope>
    <scope>INDUCTION</scope>
    <scope>POSSIBLE CLEAVAGE BY CLPPX</scope>
    <source>
        <strain>K12 / BW25113</strain>
        <strain>K12 / MG1655 / ATCC 47076</strain>
    </source>
</reference>
<reference key="6">
    <citation type="journal article" date="2010" name="Mol. Microbiol.">
        <title>Three new RelE-homologous mRNA interferases of Escherichia coli differentially induced by environmental stresses.</title>
        <authorList>
            <person name="Christensen-Dalsgaard M."/>
            <person name="Jorgensen M.G."/>
            <person name="Gerdes K."/>
        </authorList>
    </citation>
    <scope>FUNCTION AS AN MRNA INTERFERASE ANTITOXIN</scope>
    <scope>INDUCTION</scope>
    <scope>OPERON STRUCTURE</scope>
    <source>
        <strain>K12 / MG1655 / ATCC 47076</strain>
    </source>
</reference>
<reference key="7">
    <citation type="journal article" date="2011" name="Nat. Chem. Biol.">
        <title>Antitoxin MqsA helps mediate the bacterial general stress response.</title>
        <authorList>
            <person name="Wang X."/>
            <person name="Kim Y."/>
            <person name="Hong S.H."/>
            <person name="Ma Q."/>
            <person name="Brown B.L."/>
            <person name="Pu M."/>
            <person name="Tarone A.M."/>
            <person name="Benedik M.J."/>
            <person name="Peti W."/>
            <person name="Page R."/>
            <person name="Wood T.K."/>
        </authorList>
    </citation>
    <scope>FUNCTION</scope>
    <scope>DISRUPTION PHENOTYPE</scope>
    <scope>POSSIBLE CLEAVAGE BY LON</scope>
    <scope>DNA-BINDING</scope>
    <scope>MUTAGENESIS OF 97-ASN--ARG-101</scope>
    <source>
        <strain>K12 / MG1655 / ATCC 47076</strain>
    </source>
</reference>
<reference key="8">
    <citation type="journal article" date="2013" name="BMC Microbiol.">
        <title>Transcriptional cross-activation between toxin-antitoxin systems of Escherichia coli.</title>
        <authorList>
            <person name="Kasari V."/>
            <person name="Mets T."/>
            <person name="Tenson T."/>
            <person name="Kaldalu N."/>
        </authorList>
    </citation>
    <scope>INDUCTION BY OTHER TA SYSTEMS</scope>
    <source>
        <strain>K12 / BW25113</strain>
    </source>
</reference>
<reference key="9">
    <citation type="journal article" date="2013" name="J. Biol. Chem.">
        <title>The Escherichia coli toxin MqsR destabilizes the transcriptional repression complex formed between the antitoxin MqsA and the mqsRA operon promoter.</title>
        <authorList>
            <person name="Brown B.L."/>
            <person name="Lord D.M."/>
            <person name="Grigoriu S."/>
            <person name="Peti W."/>
            <person name="Page R."/>
        </authorList>
    </citation>
    <scope>FUNCTION</scope>
    <scope>BIOPHYSICOCHEMICAL PROPERTIES</scope>
    <scope>DNA-BINDING</scope>
    <scope>MUTAGENESIS OF ARG-61</scope>
</reference>
<reference key="10">
    <citation type="journal article" date="2013" name="Sci. Rep.">
        <title>Antitoxin MqsA represses curli formation through the master biofilm regulator CsgD.</title>
        <authorList>
            <person name="Soo V.W."/>
            <person name="Wood T.K."/>
        </authorList>
    </citation>
    <scope>FUNCTION</scope>
    <scope>DNA-BINDING</scope>
    <source>
        <strain>K12 / BW25113</strain>
    </source>
</reference>
<reference key="11">
    <citation type="journal article" date="2015" name="Environ. Microbiol.">
        <title>The MqsR/MqsA toxin/antitoxin system protects Escherichia coli during bile acid stress.</title>
        <authorList>
            <person name="Kwan B.W."/>
            <person name="Lord D.M."/>
            <person name="Peti W."/>
            <person name="Page R."/>
            <person name="Benedik M.J."/>
            <person name="Wood T.K."/>
        </authorList>
    </citation>
    <scope>FUNCTION</scope>
    <scope>DISRUPTION PHENOTYPE</scope>
    <source>
        <strain>K12 / BW25113</strain>
    </source>
</reference>
<reference key="12">
    <citation type="journal article" date="2010" name="Acta Crystallogr. F">
        <title>Preliminary crystallographic analysis of the Escherichia coli antitoxin MqsA (YgiT/b3021) in complex with mqsRA promoter DNA.</title>
        <authorList>
            <person name="Brown B.L."/>
            <person name="Page R."/>
        </authorList>
    </citation>
    <scope>PRELIMINARY CRYSTALLIZATION</scope>
    <scope>COFACTOR</scope>
    <scope>SUBUNIT</scope>
    <source>
        <strain>K12</strain>
    </source>
</reference>
<reference key="13">
    <citation type="journal article" date="2009" name="PLoS Pathog.">
        <title>Three dimensional structure of the MqsR:MqsA complex: a novel TA pair comprised of a toxin homologous to RelE and an antitoxin with unique properties.</title>
        <authorList>
            <person name="Brown B.L."/>
            <person name="Grigoriu S."/>
            <person name="Kim Y."/>
            <person name="Arruda J.M."/>
            <person name="Davenport A."/>
            <person name="Wood T.K."/>
            <person name="Peti W."/>
            <person name="Page R."/>
        </authorList>
    </citation>
    <scope>X-RAY CRYSTALLOGRAPHY (1.4 ANGSTROMS) IN COMPLEX WITH ZINC AND MQSR</scope>
    <scope>SUBUNIT</scope>
    <scope>DNA-BINDING</scope>
    <scope>COFACTOR</scope>
    <scope>DOMAIN</scope>
    <source>
        <strain>K12</strain>
    </source>
</reference>
<reference key="14">
    <citation type="journal article" date="2011" name="J. Biol. Chem.">
        <title>Structure of the Escherichia coli antitoxin MqsA (YgiT/b3021) bound to its gene promoter reveals extensive domain rearrangements and the specificity of transcriptional regulation.</title>
        <authorList>
            <person name="Brown B.L."/>
            <person name="Wood T.K."/>
            <person name="Peti W."/>
            <person name="Page R."/>
        </authorList>
    </citation>
    <scope>X-RAY CRYSTALLOGRAPHY (2.1 ANGSTROMS) IN COMPLEX WITH ZINC AND DNA</scope>
    <scope>COFACTOR</scope>
    <scope>SUBUNIT</scope>
    <scope>DOMAIN</scope>
    <scope>MUTAGENESIS OF ASN-97 AND ARG-101</scope>
    <source>
        <strain>K12</strain>
    </source>
</reference>
<reference key="15">
    <citation type="journal article" date="2012" name="Biochim. Biophys. Acta">
        <title>Solution structure and biophysical properties of MqsA, a Zn-containing antitoxin from Escherichia coli.</title>
        <authorList>
            <person name="Papadopoulos E."/>
            <person name="Collet J.F."/>
            <person name="Vukojevic V."/>
            <person name="Billeter M."/>
            <person name="Holmgren A."/>
            <person name="Graslund A."/>
            <person name="Vlamis-Gardikas A."/>
        </authorList>
    </citation>
    <scope>STRUCTURE BY NMR</scope>
    <scope>COFACTOR</scope>
    <scope>DOMAIN</scope>
</reference>
<feature type="chain" id="PRO_0000149762" description="Antitoxin MqsA">
    <location>
        <begin position="1"/>
        <end position="131"/>
    </location>
</feature>
<feature type="domain" description="HTH cro/C1-type" evidence="1">
    <location>
        <begin position="74"/>
        <end position="127"/>
    </location>
</feature>
<feature type="DNA-binding region" description="H-T-H motif" evidence="1">
    <location>
        <begin position="85"/>
        <end position="104"/>
    </location>
</feature>
<feature type="binding site" evidence="5 7 8 10">
    <location>
        <position position="3"/>
    </location>
    <ligand>
        <name>Zn(2+)</name>
        <dbReference type="ChEBI" id="CHEBI:29105"/>
        <note>structural</note>
    </ligand>
</feature>
<feature type="binding site" evidence="5 7 8 10">
    <location>
        <position position="6"/>
    </location>
    <ligand>
        <name>Zn(2+)</name>
        <dbReference type="ChEBI" id="CHEBI:29105"/>
        <note>structural</note>
    </ligand>
</feature>
<feature type="binding site" evidence="5 7 8 10">
    <location>
        <position position="37"/>
    </location>
    <ligand>
        <name>Zn(2+)</name>
        <dbReference type="ChEBI" id="CHEBI:29105"/>
        <note>structural</note>
    </ligand>
</feature>
<feature type="binding site" evidence="5 7 8 10">
    <location>
        <position position="40"/>
    </location>
    <ligand>
        <name>Zn(2+)</name>
        <dbReference type="ChEBI" id="CHEBI:29105"/>
        <note>structural</note>
    </ligand>
</feature>
<feature type="mutagenesis site" description="Decreases DNA-binding, decreases thermostability of MqsR-MqsA complex." evidence="11">
    <original>R</original>
    <variation>A</variation>
    <variation>D</variation>
    <location>
        <position position="61"/>
    </location>
</feature>
<feature type="mutagenesis site" description="Abolishes DNA-binding, including binding to the rpoS promoter." evidence="8 9">
    <original>NAFSR</original>
    <variation>AAFSA</variation>
    <location>
        <begin position="97"/>
        <end position="101"/>
    </location>
</feature>
<feature type="mutagenesis site" description="50-fold reduction in DNA-binding." evidence="8">
    <original>N</original>
    <variation>A</variation>
    <location>
        <position position="97"/>
    </location>
</feature>
<feature type="mutagenesis site" description="10-fold reduction in DNA-binding." evidence="8">
    <original>R</original>
    <variation>A</variation>
    <location>
        <position position="101"/>
    </location>
</feature>
<feature type="turn" evidence="20">
    <location>
        <begin position="4"/>
        <end position="6"/>
    </location>
</feature>
<feature type="strand" evidence="20">
    <location>
        <begin position="7"/>
        <end position="22"/>
    </location>
</feature>
<feature type="strand" evidence="20">
    <location>
        <begin position="25"/>
        <end position="37"/>
    </location>
</feature>
<feature type="turn" evidence="20">
    <location>
        <begin position="38"/>
        <end position="40"/>
    </location>
</feature>
<feature type="strand" evidence="21">
    <location>
        <begin position="43"/>
        <end position="45"/>
    </location>
</feature>
<feature type="helix" evidence="20">
    <location>
        <begin position="47"/>
        <end position="66"/>
    </location>
</feature>
<feature type="helix" evidence="19">
    <location>
        <begin position="71"/>
        <end position="80"/>
    </location>
</feature>
<feature type="helix" evidence="19">
    <location>
        <begin position="85"/>
        <end position="92"/>
    </location>
</feature>
<feature type="helix" evidence="19">
    <location>
        <begin position="98"/>
        <end position="103"/>
    </location>
</feature>
<feature type="helix" evidence="19">
    <location>
        <begin position="111"/>
        <end position="122"/>
    </location>
</feature>
<feature type="helix" evidence="19">
    <location>
        <begin position="124"/>
        <end position="126"/>
    </location>
</feature>
<feature type="helix" evidence="19">
    <location>
        <begin position="127"/>
        <end position="130"/>
    </location>
</feature>
<sequence length="131" mass="14703">MKCPVCHQGEMVSGIKDIPYTFRGRKTVLKGIHGLYCVHCEESIMNKEESDAFMAQVKAFRASVNAETVAPEFIVKVRKKLSLTQKEASEIFGGGVNAFSRYEKGNAQPHPSTIKLLRVLDKHPELLNEIR</sequence>